<organism>
    <name type="scientific">Malassezia globosa (strain ATCC MYA-4612 / CBS 7966)</name>
    <name type="common">Dandruff-associated fungus</name>
    <dbReference type="NCBI Taxonomy" id="425265"/>
    <lineage>
        <taxon>Eukaryota</taxon>
        <taxon>Fungi</taxon>
        <taxon>Dikarya</taxon>
        <taxon>Basidiomycota</taxon>
        <taxon>Ustilaginomycotina</taxon>
        <taxon>Malasseziomycetes</taxon>
        <taxon>Malasseziales</taxon>
        <taxon>Malasseziaceae</taxon>
        <taxon>Malassezia</taxon>
    </lineage>
</organism>
<name>SEAP1_MALGO</name>
<gene>
    <name evidence="6" type="primary">SAP1</name>
    <name type="ORF">MGL_1932</name>
</gene>
<reference key="1">
    <citation type="journal article" date="2007" name="Proc. Natl. Acad. Sci. U.S.A.">
        <title>Dandruff-associated Malassezia genomes reveal convergent and divergent virulence traits shared with plant and human fungal pathogens.</title>
        <authorList>
            <person name="Xu J."/>
            <person name="Saunders C.W."/>
            <person name="Hu P."/>
            <person name="Grant R.A."/>
            <person name="Boekhout T."/>
            <person name="Kuramae E.E."/>
            <person name="Kronstad J.W."/>
            <person name="DeAngelis Y.M."/>
            <person name="Reeder N.L."/>
            <person name="Johnstone K.R."/>
            <person name="Leland M."/>
            <person name="Fieno A.M."/>
            <person name="Begley W.M."/>
            <person name="Sun Y."/>
            <person name="Lacey M.P."/>
            <person name="Chaudhary T."/>
            <person name="Keough T."/>
            <person name="Chu L."/>
            <person name="Sears R."/>
            <person name="Yuan B."/>
            <person name="Dawson T.L. Jr."/>
        </authorList>
    </citation>
    <scope>NUCLEOTIDE SEQUENCE [LARGE SCALE GENOMIC DNA]</scope>
    <source>
        <strain>ATCC MYA-4612 / CBS 7966</strain>
    </source>
</reference>
<reference key="2">
    <citation type="journal article" date="2018" name="J. Invest. Dermatol.">
        <title>Skin commensal Malassezia globosa secreted protease attenuates Staphylococcus aureus biofilm formation.</title>
        <authorList>
            <person name="Li H."/>
            <person name="Goh B.N."/>
            <person name="Teh W.K."/>
            <person name="Jiang Z."/>
            <person name="Goh J.P.Z."/>
            <person name="Goh A."/>
            <person name="Wu G."/>
            <person name="Hoon S.S."/>
            <person name="Raida M."/>
            <person name="Camattari A."/>
            <person name="Yang L."/>
            <person name="O'Donoghue A.J."/>
            <person name="Dawson T.L. Jr."/>
        </authorList>
    </citation>
    <scope>PROTEIN SEQUENCE OF 89-395</scope>
    <scope>IDENTIFICATION BY MASS SPECTROMETRY</scope>
    <scope>FUNCTION</scope>
    <scope>INDUCTION</scope>
    <scope>SUBCELLULAR LOCATION</scope>
    <scope>CATALYTIC ACTIVITY</scope>
    <scope>BIOPHYSICOCHEMICAL PROPERTIES</scope>
    <scope>ACTIVITY REGULATION</scope>
</reference>
<reference key="3">
    <citation type="journal article" date="2024" name="Biochimie">
        <title>A Malassezia pseudoprotease dominates the secreted hydrolase landscape and is a potential allergen on skin.</title>
        <authorList>
            <person name="Chua W."/>
            <person name="Marsh C.O."/>
            <person name="Poh S.E."/>
            <person name="Koh W.L."/>
            <person name="Lee M.L.Y."/>
            <person name="Koh L.F."/>
            <person name="Tang X.E."/>
            <person name="See P."/>
            <person name="Ser Z."/>
            <person name="Wang S.M."/>
            <person name="Sobota R.M."/>
            <person name="Dawson T.L. Jr."/>
            <person name="Yew Y.W."/>
            <person name="Thng S."/>
            <person name="O'Donoghue A.J."/>
            <person name="Oon H.H."/>
            <person name="Common J.E."/>
            <person name="Li H."/>
        </authorList>
    </citation>
    <scope>FUNCTION</scope>
    <scope>CATALYTIC ACTIVITY</scope>
</reference>
<protein>
    <recommendedName>
        <fullName evidence="6">Secreted aspartyl protease 1</fullName>
        <ecNumber evidence="4 5">3.4.23.-</ecNumber>
    </recommendedName>
</protein>
<feature type="signal peptide" evidence="1">
    <location>
        <begin position="1"/>
        <end position="20"/>
    </location>
</feature>
<feature type="propeptide" id="PRO_0000445601" description="Removed in mature form" evidence="4">
    <location>
        <begin position="21"/>
        <end position="88"/>
    </location>
</feature>
<feature type="chain" id="PRO_5002727153" description="Secreted aspartyl protease 1">
    <location>
        <begin position="89"/>
        <end position="395"/>
    </location>
</feature>
<feature type="domain" description="Peptidase A1" evidence="3">
    <location>
        <begin position="105"/>
        <end position="391"/>
    </location>
</feature>
<feature type="active site" evidence="3">
    <location>
        <position position="121"/>
    </location>
</feature>
<feature type="active site" evidence="3">
    <location>
        <position position="283"/>
    </location>
</feature>
<feature type="glycosylation site" description="N-linked (GlcNAc...) asparagine" evidence="2">
    <location>
        <position position="41"/>
    </location>
</feature>
<feature type="disulfide bond" evidence="3">
    <location>
        <begin position="321"/>
        <end position="352"/>
    </location>
</feature>
<proteinExistence type="evidence at protein level"/>
<accession>A8PZM4</accession>
<keyword id="KW-0064">Aspartyl protease</keyword>
<keyword id="KW-0903">Direct protein sequencing</keyword>
<keyword id="KW-1015">Disulfide bond</keyword>
<keyword id="KW-0325">Glycoprotein</keyword>
<keyword id="KW-0378">Hydrolase</keyword>
<keyword id="KW-0645">Protease</keyword>
<keyword id="KW-1185">Reference proteome</keyword>
<keyword id="KW-0964">Secreted</keyword>
<keyword id="KW-0732">Signal</keyword>
<dbReference type="EC" id="3.4.23.-" evidence="4 5"/>
<dbReference type="EMBL" id="AAYY01000006">
    <property type="protein sequence ID" value="EDP43719.1"/>
    <property type="molecule type" value="Genomic_DNA"/>
</dbReference>
<dbReference type="RefSeq" id="XP_001730933.1">
    <property type="nucleotide sequence ID" value="XM_001730881.1"/>
</dbReference>
<dbReference type="SMR" id="A8PZM4"/>
<dbReference type="GlyCosmos" id="A8PZM4">
    <property type="glycosylation" value="1 site, No reported glycans"/>
</dbReference>
<dbReference type="GeneID" id="5855240"/>
<dbReference type="KEGG" id="mgl:MGL_1932"/>
<dbReference type="VEuPathDB" id="FungiDB:MGL_1932"/>
<dbReference type="InParanoid" id="A8PZM4"/>
<dbReference type="OMA" id="LSECHTR"/>
<dbReference type="OrthoDB" id="15189at2759"/>
<dbReference type="Proteomes" id="UP000008837">
    <property type="component" value="Unassembled WGS sequence"/>
</dbReference>
<dbReference type="GO" id="GO:0005576">
    <property type="term" value="C:extracellular region"/>
    <property type="evidence" value="ECO:0007669"/>
    <property type="project" value="UniProtKB-SubCell"/>
</dbReference>
<dbReference type="GO" id="GO:0004190">
    <property type="term" value="F:aspartic-type endopeptidase activity"/>
    <property type="evidence" value="ECO:0000314"/>
    <property type="project" value="UniProtKB"/>
</dbReference>
<dbReference type="GO" id="GO:0006508">
    <property type="term" value="P:proteolysis"/>
    <property type="evidence" value="ECO:0007669"/>
    <property type="project" value="UniProtKB-KW"/>
</dbReference>
<dbReference type="CDD" id="cd05471">
    <property type="entry name" value="pepsin_like"/>
    <property type="match status" value="1"/>
</dbReference>
<dbReference type="Gene3D" id="2.40.70.10">
    <property type="entry name" value="Acid Proteases"/>
    <property type="match status" value="2"/>
</dbReference>
<dbReference type="InterPro" id="IPR001461">
    <property type="entry name" value="Aspartic_peptidase_A1"/>
</dbReference>
<dbReference type="InterPro" id="IPR034164">
    <property type="entry name" value="Pepsin-like_dom"/>
</dbReference>
<dbReference type="InterPro" id="IPR033121">
    <property type="entry name" value="PEPTIDASE_A1"/>
</dbReference>
<dbReference type="InterPro" id="IPR021109">
    <property type="entry name" value="Peptidase_aspartic_dom_sf"/>
</dbReference>
<dbReference type="PANTHER" id="PTHR47966">
    <property type="entry name" value="BETA-SITE APP-CLEAVING ENZYME, ISOFORM A-RELATED"/>
    <property type="match status" value="1"/>
</dbReference>
<dbReference type="PANTHER" id="PTHR47966:SF57">
    <property type="entry name" value="PEPTIDASE A1 DOMAIN-CONTAINING PROTEIN"/>
    <property type="match status" value="1"/>
</dbReference>
<dbReference type="Pfam" id="PF00026">
    <property type="entry name" value="Asp"/>
    <property type="match status" value="1"/>
</dbReference>
<dbReference type="PRINTS" id="PR00792">
    <property type="entry name" value="PEPSIN"/>
</dbReference>
<dbReference type="SUPFAM" id="SSF50630">
    <property type="entry name" value="Acid proteases"/>
    <property type="match status" value="1"/>
</dbReference>
<dbReference type="PROSITE" id="PS00141">
    <property type="entry name" value="ASP_PROTEASE"/>
    <property type="match status" value="1"/>
</dbReference>
<dbReference type="PROSITE" id="PS51767">
    <property type="entry name" value="PEPTIDASE_A1"/>
    <property type="match status" value="1"/>
</dbReference>
<evidence type="ECO:0000255" key="1"/>
<evidence type="ECO:0000255" key="2">
    <source>
        <dbReference type="PROSITE-ProRule" id="PRU00498"/>
    </source>
</evidence>
<evidence type="ECO:0000255" key="3">
    <source>
        <dbReference type="PROSITE-ProRule" id="PRU01103"/>
    </source>
</evidence>
<evidence type="ECO:0000269" key="4">
    <source>
    </source>
</evidence>
<evidence type="ECO:0000269" key="5">
    <source>
    </source>
</evidence>
<evidence type="ECO:0000303" key="6">
    <source>
    </source>
</evidence>
<evidence type="ECO:0000305" key="7"/>
<comment type="function">
    <text evidence="4 5">Dominant secreted aspartyl protease that has a clear preference for aromatic residues in the P1' position directly adjacent to the cleavage site and, in particular, Trp (PubMed:29246799, PubMed:37748748). In addition, it generally cleaves peptides containing Lys, Arg, Phe, Tyr, or Nle (norleucine) in the P1 position, Nle and Glu at P2, and Arg and Val at P2' (PubMed:29246799). Has important roles in facilitating the interaction of the yeast with the external environment (PubMed:29246799). Is able to rapidly hydrolyze Staphylococcus aureus protein A, an important S.aureus virulence factor involved in immune evasion and biofilm formation. Shows anti-biofilm properties and thus plays a role in inter-kingdom interactions, beneficial for host skin health (PubMed:29246799).</text>
</comment>
<comment type="activity regulation">
    <text evidence="4">Inhibited by pepstatin A.</text>
</comment>
<comment type="biophysicochemical properties">
    <kinetics>
        <KM evidence="4">3.4 uM for peptide RPKPVE-Nva-WRK</KM>
    </kinetics>
</comment>
<comment type="subcellular location">
    <subcellularLocation>
        <location evidence="4">Secreted</location>
    </subcellularLocation>
</comment>
<comment type="induction">
    <text evidence="4">Highly expressed during exponential growth in rich media (PubMed:29246799). Also part of the 3 most highly expressed extracellular proteases in minimal media (PubMed:29246799). Expressed on human skin (PubMed:29246799).</text>
</comment>
<comment type="similarity">
    <text evidence="7">Belongs to the peptidase A1 family.</text>
</comment>
<sequence length="395" mass="43273">MQLSIQAIIGFVVAAGLAVASELPSPMTVNLERRKMLVTKNDTVDFKAVRKQANALNYKYDKLLRNFRKNTGRDHPLLHLLLDLIDKRDGKGDVDLDDIGEGQLWAGDVQFGQSKFKIDFDTGSADTLVNPFVYFPHRSKSSRKTHHTFSTAYGDGTTASGFIYTDDLKIGGYKAKDVAIGLSVTKFINDEDNQGIAGMSFPAVQSFPKKFDPFFVALVKQKVVPEPVFQFTLKRGSGSTLHLGGIDNSRFQGELSYVDVNPEDGFWISEGKVNGKKIDACIDTGSSIIFGPIDEVREVITKMDGVTPFTAGGALHGAFDCSKPPKLDFEFAGQKFNLGENQVSFGKYQGQCVLSIMGQKNLPMNAWVVGDSFLQTASVVFDMGKNRMGFAPSSN</sequence>